<reference key="1">
    <citation type="journal article" date="2014" name="Appl. Microbiol. Biotechnol.">
        <title>Identification of a gene cluster responsible for the biosynthesis of cyclic lipopeptide verlamelin.</title>
        <authorList>
            <person name="Ishidoh K."/>
            <person name="Kinoshita H."/>
            <person name="Nihira T."/>
        </authorList>
    </citation>
    <scope>NUCLEOTIDE SEQUENCE [GENOMIC DNA]</scope>
    <scope>FUNCTION</scope>
    <scope>DISRUPTION PHENOTYPE</scope>
    <scope>DOMAIN</scope>
    <scope>PATHWAY</scope>
    <source>
        <strain>HF627</strain>
    </source>
</reference>
<gene>
    <name evidence="4" type="primary">vlmS</name>
</gene>
<name>VLMS_LECSP</name>
<keyword id="KW-0413">Isomerase</keyword>
<keyword id="KW-0436">Ligase</keyword>
<keyword id="KW-0596">Phosphopantetheine</keyword>
<keyword id="KW-0597">Phosphoprotein</keyword>
<keyword id="KW-0677">Repeat</keyword>
<keyword id="KW-0843">Virulence</keyword>
<feature type="chain" id="PRO_0000438579" description="Nonribosomal peptide synthetase vlms">
    <location>
        <begin position="1"/>
        <end position="8903"/>
    </location>
</feature>
<feature type="domain" description="Carrier 1" evidence="2">
    <location>
        <begin position="11"/>
        <end position="84"/>
    </location>
</feature>
<feature type="domain" description="Carrier 2" evidence="2">
    <location>
        <begin position="1524"/>
        <end position="1600"/>
    </location>
</feature>
<feature type="domain" description="Carrier 3" evidence="2">
    <location>
        <begin position="3084"/>
        <end position="3160"/>
    </location>
</feature>
<feature type="domain" description="Carrier 4" evidence="2">
    <location>
        <begin position="4649"/>
        <end position="4725"/>
    </location>
</feature>
<feature type="domain" description="Carrier 5" evidence="2">
    <location>
        <begin position="5753"/>
        <end position="5829"/>
    </location>
</feature>
<feature type="domain" description="Carrier 6" evidence="2">
    <location>
        <begin position="6836"/>
        <end position="6912"/>
    </location>
</feature>
<feature type="domain" description="Carrier 7" evidence="2">
    <location>
        <begin position="8368"/>
        <end position="8444"/>
    </location>
</feature>
<feature type="region of interest" description="Thiolation (T) domain 1" evidence="1 6">
    <location>
        <begin position="13"/>
        <end position="81"/>
    </location>
</feature>
<feature type="region of interest" description="Adenylation (A) domain 7" evidence="1 6">
    <location>
        <begin position="59"/>
        <end position="736"/>
    </location>
</feature>
<feature type="region of interest" description="Condensation (C) domain 1" evidence="1 6">
    <location>
        <begin position="572"/>
        <end position="953"/>
    </location>
</feature>
<feature type="region of interest" description="Adenylation (A) domain 1" evidence="1 6">
    <location>
        <begin position="989"/>
        <end position="1386"/>
    </location>
</feature>
<feature type="region of interest" description="Thiolation (T) domain 2" evidence="1 6">
    <location>
        <begin position="1529"/>
        <end position="1597"/>
    </location>
</feature>
<feature type="region of interest" description="Epimerase (E) domain 1" evidence="1 6">
    <location>
        <begin position="1613"/>
        <end position="2050"/>
    </location>
</feature>
<feature type="region of interest" description="Condensation (C) domain 2" evidence="1 6">
    <location>
        <begin position="2091"/>
        <end position="2523"/>
    </location>
</feature>
<feature type="region of interest" description="Adenylation (A) domain 2" evidence="1 6">
    <location>
        <begin position="2546"/>
        <end position="2943"/>
    </location>
</feature>
<feature type="region of interest" description="Thiolation (T) domain 3" evidence="1 6">
    <location>
        <begin position="3089"/>
        <end position="3157"/>
    </location>
</feature>
<feature type="region of interest" description="Epimerase (E) domain 2" evidence="1 6">
    <location>
        <begin position="3174"/>
        <end position="3614"/>
    </location>
</feature>
<feature type="region of interest" description="Condensation (C) domain 3" evidence="1 6">
    <location>
        <begin position="3655"/>
        <end position="4093"/>
    </location>
</feature>
<feature type="region of interest" description="Adenylation (A) domain 3" evidence="1 6">
    <location>
        <begin position="4114"/>
        <end position="4512"/>
    </location>
</feature>
<feature type="region of interest" description="Thiolation (T) domain 4" evidence="1 6">
    <location>
        <begin position="4654"/>
        <end position="4722"/>
    </location>
</feature>
<feature type="region of interest" description="Condensation (C) domain 4" evidence="1 6">
    <location>
        <begin position="4775"/>
        <end position="5191"/>
    </location>
</feature>
<feature type="region of interest" description="Adenylation (A) domain 4" evidence="1 6">
    <location>
        <begin position="5216"/>
        <end position="5614"/>
    </location>
</feature>
<feature type="region of interest" description="Thiolation (T) domain 5" evidence="1 6">
    <location>
        <begin position="5758"/>
        <end position="5826"/>
    </location>
</feature>
<feature type="region of interest" description="Condensation (C) domain 5" evidence="1 6">
    <location>
        <position position="5875"/>
    </location>
</feature>
<feature type="region of interest" description="Adenylation (A) domain 5" evidence="1 6">
    <location>
        <begin position="6311"/>
        <end position="6702"/>
    </location>
</feature>
<feature type="region of interest" description="Thiolation (T) domain 6" evidence="1 6">
    <location>
        <begin position="6841"/>
        <end position="6909"/>
    </location>
</feature>
<feature type="region of interest" description="Epimerase (E) domain 3" evidence="1 6">
    <location>
        <begin position="6923"/>
        <end position="7349"/>
    </location>
</feature>
<feature type="region of interest" description="Condensation (C) domain 6" evidence="1 6">
    <location>
        <begin position="7391"/>
        <end position="7823"/>
    </location>
</feature>
<feature type="region of interest" description="Adenylation (A) domain 6" evidence="1 6">
    <location>
        <begin position="7844"/>
        <end position="8240"/>
    </location>
</feature>
<feature type="region of interest" description="Thiolation (T) domain 7" evidence="1 6">
    <location>
        <begin position="8369"/>
        <end position="8441"/>
    </location>
</feature>
<feature type="region of interest" description="Condensation (C) domain 7" evidence="1 6">
    <location>
        <begin position="8482"/>
        <end position="8897"/>
    </location>
</feature>
<feature type="modified residue" description="O-(pantetheine 4'-phosphoryl)serine" evidence="2">
    <location>
        <position position="45"/>
    </location>
</feature>
<feature type="modified residue" description="O-(pantetheine 4'-phosphoryl)serine" evidence="2">
    <location>
        <position position="1561"/>
    </location>
</feature>
<feature type="modified residue" description="O-(pantetheine 4'-phosphoryl)serine" evidence="2">
    <location>
        <position position="3121"/>
    </location>
</feature>
<feature type="modified residue" description="O-(pantetheine 4'-phosphoryl)serine" evidence="2">
    <location>
        <position position="4686"/>
    </location>
</feature>
<feature type="modified residue" description="O-(pantetheine 4'-phosphoryl)serine" evidence="2">
    <location>
        <position position="5790"/>
    </location>
</feature>
<feature type="modified residue" description="O-(pantetheine 4'-phosphoryl)serine" evidence="2">
    <location>
        <position position="6873"/>
    </location>
</feature>
<feature type="modified residue" description="O-(pantetheine 4'-phosphoryl)serine" evidence="2">
    <location>
        <position position="8405"/>
    </location>
</feature>
<protein>
    <recommendedName>
        <fullName evidence="4">Nonribosomal peptide synthetase vlms</fullName>
        <shortName evidence="4">NRPS vlmS</shortName>
        <ecNumber evidence="6">6.3.2.-</ecNumber>
    </recommendedName>
    <alternativeName>
        <fullName evidence="4">Verlamelin biosynthesis protein S</fullName>
    </alternativeName>
</protein>
<accession>A0A024F910</accession>
<comment type="function">
    <text evidence="3">Nonribosomal peptide synthetase; part of the gene cluster that mediates the biosynthesis of verlamelin, a lipopeptide that exhibits antifungal activity against plant pathogenic fungi (PubMed:24848421). Verlamelin is a cyclic hexadepsipeptide and is bridged by ester bonding between a 5-hydroxytetradecanoic acid moiety and a carboxyl group on the terminal Val of amide-bonded tetradecanoyl-hexapeptide D-allo-Thr-D-Ala-L-Pro-L-Gln-D-Tyr-L-Val (PubMed:24848421). VlmA and vlmB are altogether regarded as essential components in the biosynthesis of 5-hydroxytetradecanoic acid (PubMed:24848421). VlmA catalyzes the hydroxylation at position C5 of tetradecanoic acid produced in primary metabolism, while the precise function of vlmB still remains to be solved (PubMed:24848421). To be loaded onto the waiting NRPS, 5-hydroxytetradecanoic acid is activated in the form of acyladenylate by the AMP-dependent ligase vlmC (PubMed:24848421). VlmS seems to accept the fatty-acyl intermediate onto the initial module to further elongate amino acid residues by the downstream modules (PubMed:24848421). In addition, in the last module at its C-terminus, vlmS contains a surplus condensation (C) domain that may be involved in cyclization, the last step to form verlamelin (PubMed:24848421).</text>
</comment>
<comment type="pathway">
    <text evidence="3">Secondary metabolite biosynthesis.</text>
</comment>
<comment type="domain">
    <text evidence="3">NRP synthetases are composed of discrete domains (adenylation (A), thiolation (T) or peptidyl carrier protein (PCP) and condensation (C) domains) which when grouped together are referred to as a single module (PubMed:24848421). Each module is responsible for the recognition (via the A domain) and incorporation of a single amino acid into the growing peptide product. Thus, an NRP synthetase is generally composed of one or more modules and can terminate in a thioesterase domain (TE) that releases the newly synthesized peptide from the enzyme. Occasionally, epimerase (E) domains (responsible for l- to d-amino acid conversion) are present within the NRP synthetase. VlmS has the following 7 module architecture: T-E-C-A-T-E-C-A-T-E-C-A-T-C-A-T-C-A-T-E-C-A-T-C (PubMed:24848421). The epimerase domain in the first module is probably non-functional (PubMed:24848421).</text>
</comment>
<comment type="disruption phenotype">
    <text evidence="3">Leads to complete loss of verlamelin production (PubMed:24848421).</text>
</comment>
<comment type="similarity">
    <text evidence="5">Belongs to the NRP synthetase family.</text>
</comment>
<evidence type="ECO:0000255" key="1"/>
<evidence type="ECO:0000255" key="2">
    <source>
        <dbReference type="PROSITE-ProRule" id="PRU00258"/>
    </source>
</evidence>
<evidence type="ECO:0000269" key="3">
    <source>
    </source>
</evidence>
<evidence type="ECO:0000303" key="4">
    <source>
    </source>
</evidence>
<evidence type="ECO:0000305" key="5"/>
<evidence type="ECO:0000305" key="6">
    <source>
    </source>
</evidence>
<sequence length="8903" mass="977655">MDAPDIQAPSGSCRTTLGKVAADIFEMNVETLDWDMSFIQMGGDSILAIDFIVRCRDEGIWVDMMDLLTVDTLAELADSIDEQNGVTADVANSSDLNEHETHQENGENINATLPVADRPLRFASMEIAHVKDASLVSSALESLITRHSALRSVWSVSSTGEYTLTTKPTAMAYESQPFFLAEASEPTKMNDAFELLKNALRSDGAPPLGCLFISNNATTASSIIVLAADANLVDSLSMRILRTEFREFILGHALDAPPGFQFSNWVAAKCQSTTARPRTLQQPQRAMERAIATKLSSSTSSADSSSNEATITTFQITHSTTKKLFAAQTHAALRTIPAEIINAALVYVLGAHYKKNVDHLMIKTAYSVREQQNLPLDAVGCYEAEIEWEAPALSSHESAVFAVRRVCDAFATPSRNSYDTSTETLYIDCTRLQDTEDDELSSFSDTILGHGHHVSVATVAGQVHVSMQLGNEKISRESITNEFKLCLEKMLDELAQSPEMATLRDYPLIHWSYSDLDDLVADLKSQIVTIKGIESIGPSSAVQESFFISQAINPDSYINHVKVRMASADDSVPHQLDTEKLVYAWGNIVKRHAVLRTAFVESRDRPGKYDQLVFNPIAVLPRVTVFSCTPEASNTPSFQTGKFEVPMRLCVYEISTSELQLELDISHALVDGHSAKILLHDLRASYLQDTYFSELAPLPYTDFAFHQQTVLDAGETSDGVAYWTSYMNKAGESHLPLITTNPNLKNLETAHRTISLPAGKLRAICGQLSITPANLFHIAWALALRRIILTDTITFSYIVSGRNGSLENSEATVGPFINTLPFSLALAPETSVTEVLDLSKRDWQEGASFHNVPISELAVSKTRSLKRLGNTLLSIEREGSSSHPFADGSDLSLSARTSATDFDLTANIRFDEERIEFSVEYWASRIAWPVAKAQMSAFEDAVSFLLDGVNMSIRDFPTHGIQDKMAFLEWNTAPARLESCVHDLVLEKMAAQPTALAISAWDGEMTYGQLDHASYRVACELVEFGITPDTMVGMCMEKSKLGVVAMLGILRAGGAVVPLGVQHPIARIKGIVADAQIPLILVDEAHKERLAELEPAAKLFAVDSFVKNDKSSPSTASSPKPCTSVGPDHVAWVIYTSGSTGAPKGVMLEHGALSTSILYHGRRLDIQSYDRLLQFAAFTFDAAIQEIITAFAFGASTCIPSEQERMDQLPAFISREKITITTLTSTVAALLHPQDVPTVRTMILMGEAVQAKVVDQWIDHATVINAYGPSECCIHSTCRPVQSSLTALNIGTAIAGATWIANPKNVGQLVPLGAPGELLLEGPLLARGYLNDPIKTAKAFVADPAFVAELNLSPGRRFYRTGDLAQQNPDGTITYLGRIDTQIKIRGQRVEIGEIEYHIGKQSGVHDAAVLYIREGPLADRLVAAVNLGESTPNADQFQGSAIQCVTGDEKDKATLQLREIQYALSQQVMHYMVPSVWIPLYAMPMNNSGKTDRRALTLWVQALSQSEIDEITAAEADDDIDESSMSTVEQELRQIWSKVLDVPLRSVTYSANFFSLGGDSITAMQVVSACRARGIIVTVRKVLDCQTIPQLALAAESQATSANEEVVTEAPFPLSPIQKMYFETVAADGLRADGETSFNQGVLLHVTRRVELAELTEALNKTVAKHAMLRARFFRTQNQEFQQKIERDVTGSYRLRAHADVANAESLHGIVAESQATLDLERGPIFAADLIERQDRQVLHLVAHHLVIDLVSWRILVQDLEEVIINKALPNPRSMAFPTWIERQHNYLDKLMDRKTEVLPVTVPATSWSYWGLVPGEEVYANRTSYQVKCDSNVVDLLSGHANAALKTEPVEVLLAALVFSFQQAFPDRDVPAIFTEGHGRETIDAVSDPSDTIGWFTTMAPVYLPQRASENAIIEVVKQVKDQRRRIPGRGMPYFGSRFSTTRCKSQFASHSPAEIIFNYAGRFQQLEREDALFRFDSEDDMNTTSKIGGRVKLLSALDVAATVEGNELLITVNFSNQSQHQDSIRSWVDAYGKCIESTVKELAAVSAPIATATDFPLAHLSDADMKTIETDSDYLAVIGCSSTAELDDILPCSPIQQGILLTQLQSPSTYCIHQTCRIRSTTTSPMDIERLIAAWKEIVSRHSILRTVLLEPLPGQEQFMQMVLKEPRIGIKRVNDISDDIAAEWLESQPTLDLSELTRPPHLLTLLTTAKGEVYCRFDISHALVDASSVSLIMQDLLSAYDGNLGPNVGSDYSSYVAYLEEQDSQDELEYWTSVLRNAEPCILSPQDPIHDNRADSTIKRVVAHIDDLSPLYKFRDTYGVSLASICQLSWALVLAMRTNSENISFGNLSSGRDVPIQNVQALVGPMINMLICRLSLDWDANASDVARNLQRQVSESFEHQRSSLASIQHALGLSRNQPLFNSTLSYKRADSDAAASPATGIYLEGLAWDDPTEYDLHTNIETSKTGMEIHMQYSTAVFSDNAATKMIEGLTRAIQAVCVGGETPLSQLQLLSVSEENKLRQWNAVATPRLERCVHELVLEKMSSHADATAISAWDGSMTYQELNNASIQLAHHLVAQGVRPEVKIGLCLDKSRLGVVAMLATLRAGGAVVPLGVQSPVARIETIVNDSEMKIVLVDRNNQERLNTLASTVQLLAVDQFAQTMSTPTDILLKEPCSSVQPDNTAWIIYTSGSTGIPKGVVLEHGSIATSMRAHGPAIGIQPQDRVSQFAAYTFDVSIAETMTTLAYGACICIPSEDDRINRLTGFLSEHKVTIATLTSTVASLVQSIDTPTIKTLVLTGEAVQPNVVDQWKQHNTTVINAYGPSESSIWATSKIVEDSKDALNIGLPLSGAFWVVNRNNIGQLVPVGSPGELLIEGPLLARGYLNDQIKTAASFVVDPAFIHDLGFTTGRRMYRTGDLVQQNDDGTMVYLGRQDSQVKIRGQRVEIGEIEYHVGKQEGVQDAAVLHMKDGPLADRLVAIVIPRNDDLKTTRGQNDAQITQIPQQFKEDTKRHLQGVKQKLSQLVMQYMVPNVWIPLVAMPVNMSGKMDRLALNRWIQSLSKDELAFMTGTEETQDPDQDKLFTTAIERQLRQVWSDVLGVSVHAVTYTSNFFSLGGDSITAMQVVSMSRSHGILVTVRTVLECQTIPELALQAKMVDGDNSQLTRVPEGPFALSPIQQMYFANISGDGIRADGNYRFNQAVSLYISTHISQEQLKHALDAVVSKHAMLRARYSQGPAGWQQWIEKDVSGGFRCQSYDAVDLDAMRQIIETSQTSLDIEHGPVFAADLIERQDNDRQVLHLVAHHLSIDLVSWRIVIQDLEQLLTNGKLPNPTTLSFPVWLERQQDSLDTFIAKMDTPESALSQLLPTSVPVIDWNYWGLSPGQEVYGSLTSLETRCDSATTSLLLDQANSALKTEPVEILLAALLSSFQQVFTDRQSPAVFTEGHGREAFDTKSELDLSETVGWFTTMTPVYIPQSAATNSIQMLQKIKDQRRRVPGRGMPYFGSRYLTSAGEEKFADHATPEILFNYFGRFQQFERDDALFQINNDDDSASSQFGDLIKLFAALDVTVAVEASELHIKTRFSRQSQHQASIQRWVQAYGNAIKSLVEELMVTAATSTATDFPLARLTDTNWEFMQKQYLVAMNLQSTAEIEDILPCSPMQQGILLTQLQSPTTYCIHQISRFQPSKSGSVSVERLISSWKHVVSRHSILRTILVEPLPGQERFVQIVLKQPHLDIIKLREITDSEHAAIATLEAQPLLNARKITSPPHRITMLQSTAGEVYCRFDISHALIDGSSMAILIRDLMSAYSEDVSSDSIASGSKYSSYVAYLEDTDHQKADLQYWTSLLADSEPCILPSEASAPESEPAQLGHVSKTISDLDALHGFRDTHNVSIASICQLAWALVLSTWTGSSDISFGNLSSGRDVPIEGVQDLVGPMINMLICHVPLDWNASVADVARKIQSQSAEAFEHQRSSLAAIQHELGLSRDKPLFNTTLSYKRITPPPSSSGSTSITFEALVQEDPTEHDLHVNIDSTPTGLQFDIQFSTAVFSSAAAETLTESLVRTVGILSQSAHLSLGNVNLMSTKDIQQLCEWNSKMPSRTELCVHDLISERLNTQPESMAISAWDGDMSYLELDAVSHTLASHLITLGLDFQRSEPMIGLCMDKSKWAVVAMLAILRAGGTVVPLGVQHPVSRIDNIVQDTSAIVVIVDRGQEQRLASLGTSTHLLAIESFFEASPPVASQSTPLTADTTPDSAAWVIYTSGSTGKPKGVVLEHGALVTNILAHGRAMNIQPGDRVLQFAAYTFDISIAEVLTTLIFGACVCVPSESERMEQLACFISRQEVTTAILTSTVAALVDPQQTPTLQTLVLTGEAVQPKVVSQWIGQATVMNCYGPSESWICTTHKIESAATASVVGPPIAGGFWVVNPGSVDQLVPIGAPGELLIEGPLLAREYLNNADKTAASFINDLAFTKELGLGSRRMYRTGDLVKYNSNGALVYIGRIDTQIKIRGQRVEIGEIENQIVDLLPGAREAVVDLITPAEVEGASPMLVAVVEYRQDEPRTDATGLSLYDPSQLTDATLEALDQLQTDIAKALPAYMIPATFLLASKLPINASGKLDRRTLRLALQDMTREELGNSTGNTSTKQAPRTTMEKKLRDLFAATLQLTPDNFGINDSFFRLGGDSVAAMKMTAAARALDLPLSVVDIFRFPILADLAEATELKCSQQQEDSRSLVPFSLWPELQQDHASSSDSYKTQLLAEAAQLCGVSASQIEDVYPCSPLQAGLMAITSQRPEAYIMRRAFKLRASFPIEQLKIAYERLTEAVSILRTRIIPSTCVDALQVVVQEKPFWHGEVGMSLEQYIAKDRSASMAYGRALSRTAIVSNEDGQFFVWTMHHSVYDGWSLTKMMGMLTQLMTGQALATTVPSSRFINYLVQQDTDQVAKFWQSHFQGANWTRFPALPSPRYQAKSSGQLRSQFQLPLNPSILETDSTVLRAAWALLVASKIGADEAVINVVLSGRMAPVEDIMNMLTPTVTTVPVRVSATKNQSINKFLKTIHDTAIDMVPFEHTGLQNIRTMVPTLGSDFDPGHTFVVQPAGESESAATMWNMDLEREATPLDAFDAYALTVECTVDSQRTGEVTVDIRYDSFVIPDDDAQKLLNQFTHIAQELAQQAATTKPLAQLQMLSEEDRFLLSKWNAHVPPRLEYTLHDAVTETMTSQPDAPAIYSWDGDMTYGEVNAASHRLASHLANQGVGPEVMVGLCMDKSKWAIVSMLAILRAGGAVVPLGISHPLARIDNIIQDTAAPLVLVDSTHQHRLQDLTAPTPLLAVDKFFEEYEAANYDSSAKLPSTVQPHHPAWVIYTSGSTGTPKGIVLEHRALATSILSHGKEFGIQAHDRVLQFAAYTFDVAIQDVIATLASGACLCVLSEYDRINRLTEFLSESNVSFAILTPTVAALIEPKDVPTVKTLVLGGEALPAKVVDQWAEHALIINGYGPSECCIHSTCAKIPLGSDARNIGRGVTANTWVVDPTDIGQLVPIGSPGELLIEGPLLARGYLNDPTKTAKSFIRDPAFLSTLNLPNGRRMYRTGDLVQQNRDGSLIYIGRRDTQVKIRGQRVEIGEIESRIVDLLPEAREAVVNLVRPAGEAADLVTLVAVIECDYAAGASHDTESELELFKPSSYSDALNRALVKLDDDLGQALPSYMVPSAYLLVPKLPLNPSGKLDRRAIQDQLQLLPRAKINSLSGLTNRKQAPTTAMEKRLQNLFCQTLMLTPEEVGVNDSFFRIGGDSIAAMKLTAVARHQNLPVSAADIFRWPRLGDLAQELEQRHELKTATLNDPAPLSLWPELSQAGTQSKSQLLANIASQCGVSVEAIEDVYPCSALQAGLMAITTQRPEAYVVQRVFKLQPSLSSQHFKAAWNQLAQSLPILRTRIVPSIHTDALQVVTRDAPVWQETQASVQDYLENDRTVPIAYGTPLSRVAIVQDQQSRYFVWTIHHSAYDGWSMGKMMEVLSQVLEGTTPSVLVPVSRFIGYLSQQDKSQTSTFWQKHFEGASCTVFPELPSRQHVVNPNKTLKSRIQISQSPGVTPFTALRAAWALVVASATGSDDALINVVLSGRLASVDGIMDLVAPTITTVPFHVPISQDLSVKEFLANVDERASDMIPYEHTGLQHIRRMVPGLGPEFSPGHVFVVQPAAESESTVAALPQMELIKSDFESEDAFHAQALTVECTVGQDLSDVEVQMRYDGNVLSTESATHLLDQFSHVVEQLALNGDKSLSQLELLTANDRQRLIEWNSTVPPRVERCIHQLVEEQMSLRPSELAIKAWDGDMTYAELDTSSRQLAQRLTQMGVGPDVMVGICMDKSKMGVVAILAILRAGGAVVPLGVTHPLTRIEGIVKDTKSPLILVDSAQKQRLASLTAQLLVVDSTLTNTLTASAQNISVQSKNVAWVVYTSGSTGTPKGVVLEHGALATSVLGHGAAYNVRSDDRILQFAAYTFDAAIQEIITTLAFGACICVPSEQDRVNRLTDFFIETGITMATLTSTVAGLVRPNMTPAVRTIILVGEAVQANVVDQWIQKATVINGYGPSECSIASTCGEIRHSSYALNIGTAIAGATWIVGSTNKLVPIGTPGELLLEGPLLARGYLNDAVKTAASFTTNAAFVEELGLSSANRRMYRTGDLVKQNIDGSITYLGRMDGQIKIRGQRVEIGEIEHHLQKHSVVGDAVVLYMKQGPLSGRLIAIVVTNDTNSTSQTAEIQHLPTGQRESANLELTDVQQSLSNQLMQYMIPSVWIALASIPVNISGKTDRLTLTRWLQSLSDDEVEALTGTEETEVDESSATNTERQLRQIWSQVLDVPIEKITFSSTFFSLGGDSITAMQVVSACRSCGLLVSVQKVLNCQTIPELAATLEVMDIVNDVDQIPEGFFELSPIQRMYFDDMAAMGLRADGENRFNQAVTLRITRPTTSEELIQATDILVAKHPMLRARFIQNQQSWQQHIEKEVAGSYRFELHEVADAQAMQSIITQSQASLNLEHGPVFAIDLIDLPTKKVLHLVAHHLVIDLVSWRVLAQNLEDLLTSGTEPNPTSLSFPSWIQKQFQFLPSSEETSESVLPVQIPASNWEYWGLVPGSERFGNRSKIEVKCDTSTTSLLTGDANYAFNTEPVEVLLAALAISFQKTFTDRSMPAVFVEGHGRETMDDKVDLSDTVGWFTTMTPVHVPMDKNESDLDVLRRTKDQRRRIPGRGLPYFASRFLGPNPDKFDNHGPAEILFNYFGRFQQLERENSVFQIEQDGESAPQLGNSVKLFAALDLSIAIEGDQLSITVHYSNKSKHQSTIRQWAESYGRTIKTLVEALVIAPPTSTATDFALARLSDSDMVAIEKDCVSNVGSTRNIEDILPCSPIQQGILLSQLQSPTTYSIYQTCRIKPSKHDSLVDAHRFLGAWKQLVAHHSILRTVLLEPLPGHEKFMQIVLREPEINVLTKSGVADAEAVEWINSRPGLDLTDRHHPPHRLTLLTTTSGQVYCRFDISHALVDASSLALIIRDLMSAYEGKLGSSSNGSNYSAYIAYLDDNNQQDDLNYWTSLLNNAEPCLVPPKEPTHTATQATIGHASQKVSDLDVLHKFRDTYGISIASICQLSWALVLATWTGSQNVSFGNLSSGRDAPIPGAQDLVGPMINMLVCHLQLDWDSKVSDAARKIQTQSSEAFEHQRVSLASIHHALGLSKDQPLFNSVMSYKRLATGESTPREIILEGLTAEDPSEYDVNVHINASSTSLDFNIQFSTTVLSQAAANKLTASLVQAVHAITQNANRSLGQLKLVLTNDEAQICKWNSFMPAGLQNRVHDHVLEQMARKPEAQAIFASDGQMSYGELDVSSRQLAHHLVSQGVGPDVVVGVCMDKSRWAVVAMLSILRAGGAVAPLGVQHPVARIDTIVKDASAPVILVDAEQEQRLDTLSNNFQLINVKSFFDTVQNTVSTSEPCTTVQSHHIAWVLYTSGSTGVPKGVMLEHGSLATSIMLHSRRFAMQSTERLLQFAAFTFDAAVFDIFAPLSHGGCTCIPSEHDRMNNLEAFAIGAKVTWGFFTPTVAALMQPSDIPSMRTLILGGEVVTAKGVDHWVKAGVKVINVYGPTECSIYSTYKHIQDTQNLRNIGTTVAAGLWVVNPVSGEQLVPIGAPGELLIEGPLLARGYLNDSAKTAASFVTDPKFVKELGLSPGRRMYRTGDLVQQNSDGTLTYLDRIGTQVKIHGQRLEIGEIESQLHDLLPESRYVCVCKKGTSLVAVIESTTPNRDTPGTSAHYIVAPGPEQEKTFEYLNSTLREKLPSYMIPSAFLVINEFPLNDNGKFDRRRIGNLLNSIPSDKWLEYTAKSQTYYAPISATEAVFCELWSQCIQQLDKPVSRTDNFFDLGGDSVTAMQLVQQLAKRGMRLATIDIFNNPVLHAMAACVSDVSDDNQEYKRFSLISTEEKSTALELVAADDTVDKQIRVIDVLPTTEFQTLMVRQIMSAARRQLNQFAFDADEACDVSVLTSAISDLVATIESLRAGFVKLPGQKYLQVVYAVWEPEIRVFYTEKSPRAFYEESSEQDLFPEPTLSRPLFDVAIIIDKITQKHRVVFRISHALYDGATLHRVWTALEALTTGQAPGYFAPIGAYLQSLQAQTTSETEDYWQQLVDGATISCVGTSSEPKVSRLGHVSGPPITLPESKQSHFNLAVAVKAAWALVFGHHANTHDIVFADVMTGRNTVDSSVADVVSCCARAVPCRITYEPDWTVEKLLDLTKQQQVNSMRHEGLELQQIAQRYMGWPQDDHEEAPDMRVSMTNYVKTSIRDLLLGATQYRRATAGFQNAYASADFSVDSVEESDGSLSVSIAYAADRISEQLAATLLHRTRVTLEKMMENPRSTVGHLLKQLD</sequence>
<organism>
    <name type="scientific">Lecanicillium sp</name>
    <dbReference type="NCBI Taxonomy" id="1756136"/>
    <lineage>
        <taxon>Eukaryota</taxon>
        <taxon>Fungi</taxon>
        <taxon>Dikarya</taxon>
        <taxon>Ascomycota</taxon>
        <taxon>Pezizomycotina</taxon>
        <taxon>Sordariomycetes</taxon>
        <taxon>Hypocreomycetidae</taxon>
        <taxon>Hypocreales</taxon>
        <taxon>Cordycipitaceae</taxon>
        <taxon>Lecanicillium</taxon>
    </lineage>
</organism>
<dbReference type="EC" id="6.3.2.-" evidence="6"/>
<dbReference type="EMBL" id="AB862312">
    <property type="protein sequence ID" value="BAO73252.1"/>
    <property type="molecule type" value="Genomic_DNA"/>
</dbReference>
<dbReference type="GO" id="GO:0005737">
    <property type="term" value="C:cytoplasm"/>
    <property type="evidence" value="ECO:0007669"/>
    <property type="project" value="TreeGrafter"/>
</dbReference>
<dbReference type="GO" id="GO:0016853">
    <property type="term" value="F:isomerase activity"/>
    <property type="evidence" value="ECO:0007669"/>
    <property type="project" value="UniProtKB-KW"/>
</dbReference>
<dbReference type="GO" id="GO:0016874">
    <property type="term" value="F:ligase activity"/>
    <property type="evidence" value="ECO:0007669"/>
    <property type="project" value="UniProtKB-KW"/>
</dbReference>
<dbReference type="GO" id="GO:0031177">
    <property type="term" value="F:phosphopantetheine binding"/>
    <property type="evidence" value="ECO:0007669"/>
    <property type="project" value="InterPro"/>
</dbReference>
<dbReference type="GO" id="GO:0043041">
    <property type="term" value="P:amino acid activation for nonribosomal peptide biosynthetic process"/>
    <property type="evidence" value="ECO:0007669"/>
    <property type="project" value="TreeGrafter"/>
</dbReference>
<dbReference type="GO" id="GO:0044550">
    <property type="term" value="P:secondary metabolite biosynthetic process"/>
    <property type="evidence" value="ECO:0007669"/>
    <property type="project" value="TreeGrafter"/>
</dbReference>
<dbReference type="CDD" id="cd05918">
    <property type="entry name" value="A_NRPS_SidN3_like"/>
    <property type="match status" value="6"/>
</dbReference>
<dbReference type="CDD" id="cd19542">
    <property type="entry name" value="CT_NRPS-like"/>
    <property type="match status" value="5"/>
</dbReference>
<dbReference type="CDD" id="cd19534">
    <property type="entry name" value="E_NRPS"/>
    <property type="match status" value="3"/>
</dbReference>
<dbReference type="CDD" id="cd19545">
    <property type="entry name" value="FUM14_C_NRPS-like"/>
    <property type="match status" value="2"/>
</dbReference>
<dbReference type="FunFam" id="3.40.50.980:FF:000001">
    <property type="entry name" value="Non-ribosomal peptide synthetase"/>
    <property type="match status" value="4"/>
</dbReference>
<dbReference type="FunFam" id="3.30.559.10:FF:000016">
    <property type="entry name" value="Nonribosomal peptide synthase Pes1"/>
    <property type="match status" value="3"/>
</dbReference>
<dbReference type="FunFam" id="3.30.559.30:FF:000002">
    <property type="entry name" value="Nonribosomal peptide synthase Pes1"/>
    <property type="match status" value="3"/>
</dbReference>
<dbReference type="FunFam" id="3.30.300.30:FF:000015">
    <property type="entry name" value="Nonribosomal peptide synthase SidD"/>
    <property type="match status" value="6"/>
</dbReference>
<dbReference type="FunFam" id="3.30.559.30:FF:000003">
    <property type="entry name" value="Nonribosomal peptide synthase SidD"/>
    <property type="match status" value="2"/>
</dbReference>
<dbReference type="FunFam" id="1.10.1200.10:FF:000005">
    <property type="entry name" value="Nonribosomal peptide synthetase 1"/>
    <property type="match status" value="3"/>
</dbReference>
<dbReference type="FunFam" id="3.40.50.12780:FF:000014">
    <property type="entry name" value="Nonribosomal peptide synthetase 1"/>
    <property type="match status" value="6"/>
</dbReference>
<dbReference type="Gene3D" id="3.30.300.30">
    <property type="match status" value="6"/>
</dbReference>
<dbReference type="Gene3D" id="3.40.50.980">
    <property type="match status" value="4"/>
</dbReference>
<dbReference type="Gene3D" id="1.10.1200.10">
    <property type="entry name" value="ACP-like"/>
    <property type="match status" value="7"/>
</dbReference>
<dbReference type="Gene3D" id="3.30.559.10">
    <property type="entry name" value="Chloramphenicol acetyltransferase-like domain"/>
    <property type="match status" value="11"/>
</dbReference>
<dbReference type="Gene3D" id="2.30.38.10">
    <property type="entry name" value="Luciferase, Domain 3"/>
    <property type="match status" value="2"/>
</dbReference>
<dbReference type="Gene3D" id="3.40.50.12780">
    <property type="entry name" value="N-terminal domain of ligase-like"/>
    <property type="match status" value="4"/>
</dbReference>
<dbReference type="Gene3D" id="3.30.559.30">
    <property type="entry name" value="Nonribosomal peptide synthetase, condensation domain"/>
    <property type="match status" value="10"/>
</dbReference>
<dbReference type="InterPro" id="IPR010071">
    <property type="entry name" value="AA_adenyl_dom"/>
</dbReference>
<dbReference type="InterPro" id="IPR036736">
    <property type="entry name" value="ACP-like_sf"/>
</dbReference>
<dbReference type="InterPro" id="IPR045851">
    <property type="entry name" value="AMP-bd_C_sf"/>
</dbReference>
<dbReference type="InterPro" id="IPR020845">
    <property type="entry name" value="AMP-binding_CS"/>
</dbReference>
<dbReference type="InterPro" id="IPR000873">
    <property type="entry name" value="AMP-dep_synth/lig_dom"/>
</dbReference>
<dbReference type="InterPro" id="IPR042099">
    <property type="entry name" value="ANL_N_sf"/>
</dbReference>
<dbReference type="InterPro" id="IPR023213">
    <property type="entry name" value="CAT-like_dom_sf"/>
</dbReference>
<dbReference type="InterPro" id="IPR001242">
    <property type="entry name" value="Condensatn"/>
</dbReference>
<dbReference type="InterPro" id="IPR020806">
    <property type="entry name" value="PKS_PP-bd"/>
</dbReference>
<dbReference type="InterPro" id="IPR009081">
    <property type="entry name" value="PP-bd_ACP"/>
</dbReference>
<dbReference type="InterPro" id="IPR006162">
    <property type="entry name" value="Ppantetheine_attach_site"/>
</dbReference>
<dbReference type="NCBIfam" id="TIGR01733">
    <property type="entry name" value="AA-adenyl-dom"/>
    <property type="match status" value="6"/>
</dbReference>
<dbReference type="NCBIfam" id="NF003417">
    <property type="entry name" value="PRK04813.1"/>
    <property type="match status" value="6"/>
</dbReference>
<dbReference type="PANTHER" id="PTHR45527">
    <property type="entry name" value="NONRIBOSOMAL PEPTIDE SYNTHETASE"/>
    <property type="match status" value="1"/>
</dbReference>
<dbReference type="PANTHER" id="PTHR45527:SF12">
    <property type="entry name" value="NONRIBOSOMAL PEPTIDE SYNTHETASE IVOA"/>
    <property type="match status" value="1"/>
</dbReference>
<dbReference type="Pfam" id="PF00501">
    <property type="entry name" value="AMP-binding"/>
    <property type="match status" value="6"/>
</dbReference>
<dbReference type="Pfam" id="PF00668">
    <property type="entry name" value="Condensation"/>
    <property type="match status" value="10"/>
</dbReference>
<dbReference type="Pfam" id="PF00550">
    <property type="entry name" value="PP-binding"/>
    <property type="match status" value="7"/>
</dbReference>
<dbReference type="SMART" id="SM00823">
    <property type="entry name" value="PKS_PP"/>
    <property type="match status" value="6"/>
</dbReference>
<dbReference type="SMART" id="SM01294">
    <property type="entry name" value="PKS_PP_betabranch"/>
    <property type="match status" value="1"/>
</dbReference>
<dbReference type="SUPFAM" id="SSF56801">
    <property type="entry name" value="Acetyl-CoA synthetase-like"/>
    <property type="match status" value="6"/>
</dbReference>
<dbReference type="SUPFAM" id="SSF47336">
    <property type="entry name" value="ACP-like"/>
    <property type="match status" value="7"/>
</dbReference>
<dbReference type="SUPFAM" id="SSF52777">
    <property type="entry name" value="CoA-dependent acyltransferases"/>
    <property type="match status" value="21"/>
</dbReference>
<dbReference type="PROSITE" id="PS00455">
    <property type="entry name" value="AMP_BINDING"/>
    <property type="match status" value="6"/>
</dbReference>
<dbReference type="PROSITE" id="PS50075">
    <property type="entry name" value="CARRIER"/>
    <property type="match status" value="7"/>
</dbReference>
<dbReference type="PROSITE" id="PS00012">
    <property type="entry name" value="PHOSPHOPANTETHEINE"/>
    <property type="match status" value="2"/>
</dbReference>
<proteinExistence type="inferred from homology"/>